<keyword id="KW-0002">3D-structure</keyword>
<keyword id="KW-0024">Alternative initiation</keyword>
<keyword id="KW-0963">Cytoplasm</keyword>
<keyword id="KW-0903">Direct protein sequencing</keyword>
<keyword id="KW-0238">DNA-binding</keyword>
<keyword id="KW-0378">Hydrolase</keyword>
<keyword id="KW-0496">Mitochondrion</keyword>
<keyword id="KW-0645">Protease</keyword>
<keyword id="KW-1185">Reference proteome</keyword>
<keyword id="KW-0788">Thiol protease</keyword>
<keyword id="KW-0809">Transit peptide</keyword>
<feature type="transit peptide" description="Mitochondrion" evidence="1">
    <location>
        <begin position="1"/>
        <end position="30"/>
    </location>
</feature>
<feature type="chain" id="PRO_0000050554" description="Cysteine proteinase 1, mitochondrial">
    <location>
        <begin position="31"/>
        <end position="482"/>
    </location>
</feature>
<feature type="propeptide" id="PRO_0000292865" description="Removed in mature form; by autocatalysis" evidence="8">
    <location>
        <position position="483"/>
    </location>
</feature>
<feature type="active site">
    <location>
        <position position="102"/>
    </location>
</feature>
<feature type="active site">
    <location>
        <position position="398"/>
    </location>
</feature>
<feature type="active site">
    <location>
        <position position="421"/>
    </location>
</feature>
<feature type="splice variant" id="VSP_026453" description="In isoform Cytoplasmic." evidence="13">
    <location>
        <begin position="1"/>
        <end position="29"/>
    </location>
</feature>
<feature type="mutagenesis site" description="Abolishes peptidase activity, which also hinders autocatalytic processing of the enzyme to the mature form." evidence="11">
    <original>C</original>
    <variation>A</variation>
    <location>
        <position position="102"/>
    </location>
</feature>
<feature type="mutagenesis site" description="In GAL6DB; disrupts nucleic acid-binding activity, but retains normal peptidase activity." evidence="11">
    <original>KDKK</original>
    <variation>ADAA</variation>
    <location>
        <begin position="271"/>
        <end position="274"/>
    </location>
</feature>
<feature type="mutagenesis site" description="Abolishes Hcy-thiolactonase activity." evidence="7">
    <original>H</original>
    <variation>A</variation>
    <location>
        <position position="398"/>
    </location>
</feature>
<feature type="mutagenesis site" description="Results in the abnormal cleavage of 3 C-terminal residues instead of only 1 during autocatalytic processing." evidence="12">
    <original>G</original>
    <variation>A</variation>
    <location>
        <position position="479"/>
    </location>
</feature>
<feature type="sequence conflict" description="In Ref. 2; CAA48878." evidence="13" ref="2">
    <original>I</original>
    <variation>M</variation>
    <location>
        <position position="187"/>
    </location>
</feature>
<feature type="helix" evidence="15">
    <location>
        <begin position="36"/>
        <end position="47"/>
    </location>
</feature>
<feature type="helix" evidence="15">
    <location>
        <begin position="50"/>
        <end position="59"/>
    </location>
</feature>
<feature type="helix" evidence="15">
    <location>
        <begin position="64"/>
        <end position="68"/>
    </location>
</feature>
<feature type="helix" evidence="15">
    <location>
        <begin position="71"/>
        <end position="77"/>
    </location>
</feature>
<feature type="strand" evidence="15">
    <location>
        <begin position="83"/>
        <end position="85"/>
    </location>
</feature>
<feature type="strand" evidence="17">
    <location>
        <begin position="98"/>
        <end position="100"/>
    </location>
</feature>
<feature type="helix" evidence="15">
    <location>
        <begin position="102"/>
        <end position="118"/>
    </location>
</feature>
<feature type="helix" evidence="15">
    <location>
        <begin position="128"/>
        <end position="149"/>
    </location>
</feature>
<feature type="turn" evidence="15">
    <location>
        <begin position="150"/>
        <end position="152"/>
    </location>
</feature>
<feature type="helix" evidence="15">
    <location>
        <begin position="158"/>
        <end position="165"/>
    </location>
</feature>
<feature type="helix" evidence="15">
    <location>
        <begin position="174"/>
        <end position="184"/>
    </location>
</feature>
<feature type="helix" evidence="15">
    <location>
        <begin position="189"/>
        <end position="191"/>
    </location>
</feature>
<feature type="helix" evidence="15">
    <location>
        <begin position="197"/>
        <end position="200"/>
    </location>
</feature>
<feature type="helix" evidence="15">
    <location>
        <begin position="203"/>
        <end position="226"/>
    </location>
</feature>
<feature type="strand" evidence="14">
    <location>
        <begin position="229"/>
        <end position="231"/>
    </location>
</feature>
<feature type="helix" evidence="15">
    <location>
        <begin position="232"/>
        <end position="252"/>
    </location>
</feature>
<feature type="strand" evidence="15">
    <location>
        <begin position="264"/>
        <end position="269"/>
    </location>
</feature>
<feature type="strand" evidence="15">
    <location>
        <begin position="275"/>
        <end position="280"/>
    </location>
</feature>
<feature type="helix" evidence="15">
    <location>
        <begin position="282"/>
        <end position="288"/>
    </location>
</feature>
<feature type="strand" evidence="15">
    <location>
        <begin position="296"/>
        <end position="301"/>
    </location>
</feature>
<feature type="strand" evidence="15">
    <location>
        <begin position="311"/>
        <end position="314"/>
    </location>
</feature>
<feature type="strand" evidence="15">
    <location>
        <begin position="326"/>
        <end position="330"/>
    </location>
</feature>
<feature type="helix" evidence="15">
    <location>
        <begin position="333"/>
        <end position="345"/>
    </location>
</feature>
<feature type="strand" evidence="15">
    <location>
        <begin position="350"/>
        <end position="354"/>
    </location>
</feature>
<feature type="turn" evidence="15">
    <location>
        <begin position="356"/>
        <end position="359"/>
    </location>
</feature>
<feature type="turn" evidence="15">
    <location>
        <begin position="362"/>
        <end position="365"/>
    </location>
</feature>
<feature type="helix" evidence="15">
    <location>
        <begin position="374"/>
        <end position="377"/>
    </location>
</feature>
<feature type="helix" evidence="15">
    <location>
        <begin position="385"/>
        <end position="390"/>
    </location>
</feature>
<feature type="strand" evidence="15">
    <location>
        <begin position="398"/>
        <end position="407"/>
    </location>
</feature>
<feature type="turn" evidence="15">
    <location>
        <begin position="409"/>
        <end position="411"/>
    </location>
</feature>
<feature type="strand" evidence="15">
    <location>
        <begin position="414"/>
        <end position="420"/>
    </location>
</feature>
<feature type="turn" evidence="16">
    <location>
        <begin position="425"/>
        <end position="428"/>
    </location>
</feature>
<feature type="strand" evidence="15">
    <location>
        <begin position="432"/>
        <end position="436"/>
    </location>
</feature>
<feature type="helix" evidence="15">
    <location>
        <begin position="437"/>
        <end position="443"/>
    </location>
</feature>
<feature type="strand" evidence="15">
    <location>
        <begin position="444"/>
        <end position="450"/>
    </location>
</feature>
<feature type="helix" evidence="15">
    <location>
        <begin position="451"/>
        <end position="453"/>
    </location>
</feature>
<feature type="helix" evidence="15">
    <location>
        <begin position="456"/>
        <end position="463"/>
    </location>
</feature>
<feature type="strand" evidence="15">
    <location>
        <begin position="470"/>
        <end position="472"/>
    </location>
</feature>
<feature type="helix" evidence="14">
    <location>
        <begin position="477"/>
        <end position="479"/>
    </location>
</feature>
<proteinExistence type="evidence at protein level"/>
<dbReference type="EC" id="3.4.22.40"/>
<dbReference type="EMBL" id="M97910">
    <property type="protein sequence ID" value="AAA35231.1"/>
    <property type="molecule type" value="Genomic_DNA"/>
</dbReference>
<dbReference type="EMBL" id="X69124">
    <property type="protein sequence ID" value="CAA48878.1"/>
    <property type="molecule type" value="Genomic_DNA"/>
</dbReference>
<dbReference type="EMBL" id="X68228">
    <property type="protein sequence ID" value="CAA48309.1"/>
    <property type="molecule type" value="Genomic_DNA"/>
</dbReference>
<dbReference type="EMBL" id="Z71515">
    <property type="protein sequence ID" value="CAA96144.1"/>
    <property type="molecule type" value="Genomic_DNA"/>
</dbReference>
<dbReference type="EMBL" id="Z69381">
    <property type="protein sequence ID" value="CAA93359.1"/>
    <property type="molecule type" value="Genomic_DNA"/>
</dbReference>
<dbReference type="EMBL" id="U74299">
    <property type="protein sequence ID" value="AAB18260.1"/>
    <property type="molecule type" value="Genomic_DNA"/>
</dbReference>
<dbReference type="EMBL" id="BK006947">
    <property type="protein sequence ID" value="DAA10320.1"/>
    <property type="molecule type" value="Genomic_DNA"/>
</dbReference>
<dbReference type="PIR" id="A46093">
    <property type="entry name" value="S25606"/>
</dbReference>
<dbReference type="RefSeq" id="NP_014160.2">
    <molecule id="Q01532-2"/>
    <property type="nucleotide sequence ID" value="NM_001183077.1"/>
</dbReference>
<dbReference type="PDB" id="1A6R">
    <property type="method" value="X-ray"/>
    <property type="resolution" value="2.05 A"/>
    <property type="chains" value="A=32-483"/>
</dbReference>
<dbReference type="PDB" id="1GCB">
    <property type="method" value="X-ray"/>
    <property type="resolution" value="2.20 A"/>
    <property type="chains" value="A=30-483"/>
</dbReference>
<dbReference type="PDB" id="2DZY">
    <property type="method" value="X-ray"/>
    <property type="resolution" value="2.57 A"/>
    <property type="chains" value="A=30-482"/>
</dbReference>
<dbReference type="PDB" id="2DZZ">
    <property type="method" value="X-ray"/>
    <property type="resolution" value="2.15 A"/>
    <property type="chains" value="A=30-482"/>
</dbReference>
<dbReference type="PDB" id="2E00">
    <property type="method" value="X-ray"/>
    <property type="resolution" value="2.00 A"/>
    <property type="chains" value="A=30-482"/>
</dbReference>
<dbReference type="PDB" id="2E01">
    <property type="method" value="X-ray"/>
    <property type="resolution" value="1.73 A"/>
    <property type="chains" value="A=30-482"/>
</dbReference>
<dbReference type="PDB" id="2E02">
    <property type="method" value="X-ray"/>
    <property type="resolution" value="2.20 A"/>
    <property type="chains" value="A=30-482"/>
</dbReference>
<dbReference type="PDB" id="2E03">
    <property type="method" value="X-ray"/>
    <property type="resolution" value="2.13 A"/>
    <property type="chains" value="A=30-482"/>
</dbReference>
<dbReference type="PDB" id="3GCB">
    <property type="method" value="X-ray"/>
    <property type="resolution" value="1.87 A"/>
    <property type="chains" value="A=30-482"/>
</dbReference>
<dbReference type="PDBsum" id="1A6R"/>
<dbReference type="PDBsum" id="1GCB"/>
<dbReference type="PDBsum" id="2DZY"/>
<dbReference type="PDBsum" id="2DZZ"/>
<dbReference type="PDBsum" id="2E00"/>
<dbReference type="PDBsum" id="2E01"/>
<dbReference type="PDBsum" id="2E02"/>
<dbReference type="PDBsum" id="2E03"/>
<dbReference type="PDBsum" id="3GCB"/>
<dbReference type="SMR" id="Q01532"/>
<dbReference type="BioGRID" id="35600">
    <property type="interactions" value="58"/>
</dbReference>
<dbReference type="DIP" id="DIP-2941N"/>
<dbReference type="FunCoup" id="Q01532">
    <property type="interactions" value="848"/>
</dbReference>
<dbReference type="IntAct" id="Q01532">
    <property type="interactions" value="11"/>
</dbReference>
<dbReference type="MINT" id="Q01532"/>
<dbReference type="STRING" id="4932.YNL239W"/>
<dbReference type="MEROPS" id="C01.085"/>
<dbReference type="iPTMnet" id="Q01532"/>
<dbReference type="PaxDb" id="4932-YNL239W"/>
<dbReference type="PeptideAtlas" id="Q01532"/>
<dbReference type="EnsemblFungi" id="YNL239W_mRNA">
    <molecule id="Q01532-2"/>
    <property type="protein sequence ID" value="YNL239W"/>
    <property type="gene ID" value="YNL239W"/>
</dbReference>
<dbReference type="GeneID" id="855482"/>
<dbReference type="KEGG" id="sce:YNL239W"/>
<dbReference type="AGR" id="SGD:S000005183"/>
<dbReference type="SGD" id="S000005183">
    <property type="gene designation" value="LAP3"/>
</dbReference>
<dbReference type="eggNOG" id="KOG4128">
    <property type="taxonomic scope" value="Eukaryota"/>
</dbReference>
<dbReference type="GeneTree" id="ENSGT00390000001735"/>
<dbReference type="HOGENOM" id="CLU_038600_0_1_1"/>
<dbReference type="InParanoid" id="Q01532"/>
<dbReference type="OMA" id="DDGGWWQ"/>
<dbReference type="OrthoDB" id="2666448at2759"/>
<dbReference type="BioCyc" id="YEAST:G3O-33237-MONOMER"/>
<dbReference type="BRENDA" id="3.4.13.23">
    <property type="organism ID" value="984"/>
</dbReference>
<dbReference type="BRENDA" id="3.4.22.40">
    <property type="organism ID" value="984"/>
</dbReference>
<dbReference type="Reactome" id="R-SCE-983168">
    <property type="pathway name" value="Antigen processing: Ubiquitination &amp; Proteasome degradation"/>
</dbReference>
<dbReference type="SABIO-RK" id="Q01532"/>
<dbReference type="BioGRID-ORCS" id="855482">
    <property type="hits" value="0 hits in 10 CRISPR screens"/>
</dbReference>
<dbReference type="EvolutionaryTrace" id="Q01532"/>
<dbReference type="PRO" id="PR:Q01532"/>
<dbReference type="Proteomes" id="UP000002311">
    <property type="component" value="Chromosome XIV"/>
</dbReference>
<dbReference type="RNAct" id="Q01532">
    <property type="molecule type" value="protein"/>
</dbReference>
<dbReference type="GO" id="GO:0005737">
    <property type="term" value="C:cytoplasm"/>
    <property type="evidence" value="ECO:0000314"/>
    <property type="project" value="SGD"/>
</dbReference>
<dbReference type="GO" id="GO:0005739">
    <property type="term" value="C:mitochondrion"/>
    <property type="evidence" value="ECO:0007005"/>
    <property type="project" value="SGD"/>
</dbReference>
<dbReference type="GO" id="GO:0004177">
    <property type="term" value="F:aminopeptidase activity"/>
    <property type="evidence" value="ECO:0000318"/>
    <property type="project" value="GO_Central"/>
</dbReference>
<dbReference type="GO" id="GO:0070005">
    <property type="term" value="F:cysteine-type aminopeptidase activity"/>
    <property type="evidence" value="ECO:0007669"/>
    <property type="project" value="InterPro"/>
</dbReference>
<dbReference type="GO" id="GO:0004197">
    <property type="term" value="F:cysteine-type endopeptidase activity"/>
    <property type="evidence" value="ECO:0007669"/>
    <property type="project" value="UniProtKB-EC"/>
</dbReference>
<dbReference type="GO" id="GO:0008234">
    <property type="term" value="F:cysteine-type peptidase activity"/>
    <property type="evidence" value="ECO:0000314"/>
    <property type="project" value="SGD"/>
</dbReference>
<dbReference type="GO" id="GO:0003690">
    <property type="term" value="F:double-stranded DNA binding"/>
    <property type="evidence" value="ECO:0000314"/>
    <property type="project" value="SGD"/>
</dbReference>
<dbReference type="GO" id="GO:0003729">
    <property type="term" value="F:mRNA binding"/>
    <property type="evidence" value="ECO:0000314"/>
    <property type="project" value="SGD"/>
</dbReference>
<dbReference type="GO" id="GO:0000978">
    <property type="term" value="F:RNA polymerase II cis-regulatory region sequence-specific DNA binding"/>
    <property type="evidence" value="ECO:0000314"/>
    <property type="project" value="SGD"/>
</dbReference>
<dbReference type="GO" id="GO:0003697">
    <property type="term" value="F:single-stranded DNA binding"/>
    <property type="evidence" value="ECO:0000314"/>
    <property type="project" value="SGD"/>
</dbReference>
<dbReference type="GO" id="GO:0043418">
    <property type="term" value="P:homocysteine catabolic process"/>
    <property type="evidence" value="ECO:0000314"/>
    <property type="project" value="SGD"/>
</dbReference>
<dbReference type="GO" id="GO:0000122">
    <property type="term" value="P:negative regulation of transcription by RNA polymerase II"/>
    <property type="evidence" value="ECO:0000315"/>
    <property type="project" value="SGD"/>
</dbReference>
<dbReference type="GO" id="GO:0006508">
    <property type="term" value="P:proteolysis"/>
    <property type="evidence" value="ECO:0007669"/>
    <property type="project" value="UniProtKB-KW"/>
</dbReference>
<dbReference type="GO" id="GO:0046677">
    <property type="term" value="P:response to antibiotic"/>
    <property type="evidence" value="ECO:0000314"/>
    <property type="project" value="SGD"/>
</dbReference>
<dbReference type="GO" id="GO:0009636">
    <property type="term" value="P:response to toxic substance"/>
    <property type="evidence" value="ECO:0000318"/>
    <property type="project" value="GO_Central"/>
</dbReference>
<dbReference type="CDD" id="cd00585">
    <property type="entry name" value="Peptidase_C1B"/>
    <property type="match status" value="1"/>
</dbReference>
<dbReference type="FunFam" id="3.90.70.10:FF:000091">
    <property type="entry name" value="Aminopeptidase C"/>
    <property type="match status" value="1"/>
</dbReference>
<dbReference type="Gene3D" id="3.90.70.10">
    <property type="entry name" value="Cysteine proteinases"/>
    <property type="match status" value="1"/>
</dbReference>
<dbReference type="InterPro" id="IPR038765">
    <property type="entry name" value="Papain-like_cys_pep_sf"/>
</dbReference>
<dbReference type="InterPro" id="IPR000169">
    <property type="entry name" value="Pept_cys_AS"/>
</dbReference>
<dbReference type="InterPro" id="IPR025660">
    <property type="entry name" value="Pept_his_AS"/>
</dbReference>
<dbReference type="InterPro" id="IPR004134">
    <property type="entry name" value="Peptidase_C1B"/>
</dbReference>
<dbReference type="PANTHER" id="PTHR10363">
    <property type="entry name" value="BLEOMYCIN HYDROLASE"/>
    <property type="match status" value="1"/>
</dbReference>
<dbReference type="PANTHER" id="PTHR10363:SF2">
    <property type="entry name" value="BLEOMYCIN HYDROLASE"/>
    <property type="match status" value="1"/>
</dbReference>
<dbReference type="Pfam" id="PF03051">
    <property type="entry name" value="Peptidase_C1_2"/>
    <property type="match status" value="1"/>
</dbReference>
<dbReference type="PIRSF" id="PIRSF005700">
    <property type="entry name" value="PepC"/>
    <property type="match status" value="1"/>
</dbReference>
<dbReference type="SUPFAM" id="SSF54001">
    <property type="entry name" value="Cysteine proteinases"/>
    <property type="match status" value="1"/>
</dbReference>
<dbReference type="PROSITE" id="PS00139">
    <property type="entry name" value="THIOL_PROTEASE_CYS"/>
    <property type="match status" value="1"/>
</dbReference>
<dbReference type="PROSITE" id="PS00639">
    <property type="entry name" value="THIOL_PROTEASE_HIS"/>
    <property type="match status" value="1"/>
</dbReference>
<protein>
    <recommendedName>
        <fullName>Cysteine proteinase 1, mitochondrial</fullName>
        <ecNumber>3.4.22.40</ecNumber>
    </recommendedName>
    <alternativeName>
        <fullName>Bleomycin hydrolase</fullName>
        <shortName>BLM hydrolase</shortName>
    </alternativeName>
    <alternativeName>
        <fullName>Homocysteine-thiolactonase</fullName>
        <shortName>HTLase</shortName>
        <shortName>Hcy-thiolactonase</shortName>
    </alternativeName>
    <alternativeName>
        <fullName>Leucine aminopeptidase 3</fullName>
    </alternativeName>
    <alternativeName>
        <fullName>Y3</fullName>
    </alternativeName>
</protein>
<name>BLH1_YEAST</name>
<reference key="1">
    <citation type="journal article" date="1992" name="J. Biol. Chem.">
        <title>Cloning and characterization of a cysteine proteinase from Saccharomyces cerevisiae.</title>
        <authorList>
            <person name="Kambouris N.G."/>
            <person name="Burke D.J."/>
            <person name="Creutz C.E."/>
        </authorList>
    </citation>
    <scope>NUCLEOTIDE SEQUENCE [GENOMIC DNA]</scope>
    <scope>BIOPHYSICOCHEMICAL PROPERTIES</scope>
    <scope>ACTIVITY REGULATION</scope>
</reference>
<reference key="2">
    <citation type="journal article" date="1993" name="Biochim. Biophys. Acta">
        <title>A yeast gene (BLH1) encodes a polypeptide with high homology to vertebrate bleomycin hydrolase, a family member of thiol proteinases.</title>
        <authorList>
            <person name="Magdolen U."/>
            <person name="Mueller G."/>
            <person name="Magdolen V."/>
            <person name="Bandlow W."/>
        </authorList>
    </citation>
    <scope>NUCLEOTIDE SEQUENCE [GENOMIC DNA]</scope>
    <scope>PROTEIN SEQUENCE OF 228-250 AND 367-387</scope>
</reference>
<reference key="3">
    <citation type="journal article" date="1993" name="J. Biol. Chem.">
        <title>BLH1 codes for a yeast thiol aminopeptidase, the equivalent of mammalian bleomycin hydrolase.</title>
        <authorList>
            <person name="Enenkel C."/>
            <person name="Wolf D.H."/>
        </authorList>
    </citation>
    <scope>NUCLEOTIDE SEQUENCE [GENOMIC DNA]</scope>
    <scope>BIOPHYSICOCHEMICAL PROPERTIES</scope>
    <scope>ACTIVITY REGULATION</scope>
</reference>
<reference key="4">
    <citation type="journal article" date="1996" name="Yeast">
        <title>The DNA sequence of cosmid 14-5 from chromosome XIV reveals 21 open reading frames including a novel gene encoding a globin-like domain.</title>
        <authorList>
            <person name="Pandolfo D."/>
            <person name="de Antoni A."/>
            <person name="Lanfranchi G."/>
            <person name="Valle G."/>
        </authorList>
    </citation>
    <scope>NUCLEOTIDE SEQUENCE [GENOMIC DNA]</scope>
</reference>
<reference key="5">
    <citation type="journal article" date="1997" name="Nature">
        <title>The nucleotide sequence of Saccharomyces cerevisiae chromosome XIV and its evolutionary implications.</title>
        <authorList>
            <person name="Philippsen P."/>
            <person name="Kleine K."/>
            <person name="Poehlmann R."/>
            <person name="Duesterhoeft A."/>
            <person name="Hamberg K."/>
            <person name="Hegemann J.H."/>
            <person name="Obermaier B."/>
            <person name="Urrestarazu L.A."/>
            <person name="Aert R."/>
            <person name="Albermann K."/>
            <person name="Altmann R."/>
            <person name="Andre B."/>
            <person name="Baladron V."/>
            <person name="Ballesta J.P.G."/>
            <person name="Becam A.-M."/>
            <person name="Beinhauer J.D."/>
            <person name="Boskovic J."/>
            <person name="Buitrago M.J."/>
            <person name="Bussereau F."/>
            <person name="Coster F."/>
            <person name="Crouzet M."/>
            <person name="D'Angelo M."/>
            <person name="Dal Pero F."/>
            <person name="De Antoni A."/>
            <person name="del Rey F."/>
            <person name="Doignon F."/>
            <person name="Domdey H."/>
            <person name="Dubois E."/>
            <person name="Fiedler T.A."/>
            <person name="Fleig U."/>
            <person name="Floeth M."/>
            <person name="Fritz C."/>
            <person name="Gaillardin C."/>
            <person name="Garcia-Cantalejo J.M."/>
            <person name="Glansdorff N."/>
            <person name="Goffeau A."/>
            <person name="Gueldener U."/>
            <person name="Herbert C.J."/>
            <person name="Heumann K."/>
            <person name="Heuss-Neitzel D."/>
            <person name="Hilbert H."/>
            <person name="Hinni K."/>
            <person name="Iraqui Houssaini I."/>
            <person name="Jacquet M."/>
            <person name="Jimenez A."/>
            <person name="Jonniaux J.-L."/>
            <person name="Karpfinger-Hartl L."/>
            <person name="Lanfranchi G."/>
            <person name="Lepingle A."/>
            <person name="Levesque H."/>
            <person name="Lyck R."/>
            <person name="Maftahi M."/>
            <person name="Mallet L."/>
            <person name="Maurer C.T.C."/>
            <person name="Messenguy F."/>
            <person name="Mewes H.-W."/>
            <person name="Moestl D."/>
            <person name="Nasr F."/>
            <person name="Nicaud J.-M."/>
            <person name="Niedenthal R.K."/>
            <person name="Pandolfo D."/>
            <person name="Pierard A."/>
            <person name="Piravandi E."/>
            <person name="Planta R.J."/>
            <person name="Pohl T.M."/>
            <person name="Purnelle B."/>
            <person name="Rebischung C."/>
            <person name="Remacha M.A."/>
            <person name="Revuelta J.L."/>
            <person name="Rinke M."/>
            <person name="Saiz J.E."/>
            <person name="Sartorello F."/>
            <person name="Scherens B."/>
            <person name="Sen-Gupta M."/>
            <person name="Soler-Mira A."/>
            <person name="Urbanus J.H.M."/>
            <person name="Valle G."/>
            <person name="Van Dyck L."/>
            <person name="Verhasselt P."/>
            <person name="Vierendeels F."/>
            <person name="Vissers S."/>
            <person name="Voet M."/>
            <person name="Volckaert G."/>
            <person name="Wach A."/>
            <person name="Wambutt R."/>
            <person name="Wedler H."/>
            <person name="Zollner A."/>
            <person name="Hani J."/>
        </authorList>
    </citation>
    <scope>NUCLEOTIDE SEQUENCE [LARGE SCALE GENOMIC DNA]</scope>
    <source>
        <strain>ATCC 204508 / S288c</strain>
    </source>
</reference>
<reference key="6">
    <citation type="journal article" date="2014" name="G3 (Bethesda)">
        <title>The reference genome sequence of Saccharomyces cerevisiae: Then and now.</title>
        <authorList>
            <person name="Engel S.R."/>
            <person name="Dietrich F.S."/>
            <person name="Fisk D.G."/>
            <person name="Binkley G."/>
            <person name="Balakrishnan R."/>
            <person name="Costanzo M.C."/>
            <person name="Dwight S.S."/>
            <person name="Hitz B.C."/>
            <person name="Karra K."/>
            <person name="Nash R.S."/>
            <person name="Weng S."/>
            <person name="Wong E.D."/>
            <person name="Lloyd P."/>
            <person name="Skrzypek M.S."/>
            <person name="Miyasato S.R."/>
            <person name="Simison M."/>
            <person name="Cherry J.M."/>
        </authorList>
    </citation>
    <scope>GENOME REANNOTATION</scope>
    <source>
        <strain>ATCC 204508 / S288c</strain>
    </source>
</reference>
<reference key="7">
    <citation type="journal article" date="1997" name="J. Biol. Chem.">
        <title>The cysteine-peptidase bleomycin hydrolase is a member of the galactose regulon in yeast.</title>
        <authorList>
            <person name="Zheng W."/>
            <person name="Xu H.E."/>
            <person name="Johnston S.A."/>
        </authorList>
    </citation>
    <scope>NUCLEOTIDE SEQUENCE [GENOMIC DNA] OF 1-58</scope>
    <scope>MASS SPECTROMETRY</scope>
    <scope>MUTAGENESIS OF CYS-102 AND 271-LYS--LYS-274</scope>
</reference>
<reference key="8">
    <citation type="journal article" date="1991" name="Yeast">
        <title>Calcium-dependent secretory vesicle-binding and lipid-binding proteins of Saccharomyces cerevisiae.</title>
        <authorList>
            <person name="Creutz C.E."/>
            <person name="Snyder S.L."/>
            <person name="Kambouris N.G."/>
        </authorList>
    </citation>
    <scope>PROTEIN SEQUENCE OF 228-251 AND 367-387</scope>
</reference>
<reference key="9">
    <citation type="journal article" date="1995" name="Science">
        <title>Crystal structure of a conserved protease that binds DNA: the bleomycin hydrolase, Gal6.</title>
        <authorList>
            <person name="Joshua-Tor L."/>
            <person name="Xu H.E."/>
            <person name="Johnston S.A."/>
            <person name="Rees D.C."/>
        </authorList>
    </citation>
    <scope>PROTEIN SEQUENCE OF C-TERMINUS</scope>
    <scope>X-RAY CRYSTALLOGRAPHY (2.2 ANGSTROMS) OF 30-483</scope>
    <scope>SUBUNIT</scope>
</reference>
<reference key="10">
    <citation type="journal article" date="1994" name="J. Biol. Chem.">
        <title>Yeast bleomycin hydrolase is a DNA-binding cysteine protease. Identification, purification, biochemical characterization.</title>
        <authorList>
            <person name="Xu H.E."/>
            <person name="Johnston S.A."/>
        </authorList>
    </citation>
    <scope>DNA-BINDING</scope>
    <scope>BIOPHYSICOCHEMICAL PROPERTIES</scope>
</reference>
<reference key="11">
    <citation type="journal article" date="1998" name="Mol. Cell. Biol.">
        <title>The nucleic acid binding activity of bleomycin hydrolase is involved in bleomycin detoxification.</title>
        <authorList>
            <person name="Zheng W."/>
            <person name="Johnston S.A."/>
        </authorList>
    </citation>
    <scope>DNA-BINDING</scope>
    <scope>SUBCELLULAR LOCATION</scope>
</reference>
<reference key="12">
    <citation type="journal article" date="2002" name="Biochem. Cell Biol.">
        <title>Cellular resistance to bleomycin in Saccharomyces cerevisiae is not affected by changes in bleomycin hydrolase levels.</title>
        <authorList>
            <person name="Wang H."/>
            <person name="Ramotar D."/>
        </authorList>
    </citation>
    <scope>FUNCTION</scope>
</reference>
<reference key="13">
    <citation type="journal article" date="2003" name="Nature">
        <title>Global analysis of protein localization in budding yeast.</title>
        <authorList>
            <person name="Huh W.-K."/>
            <person name="Falvo J.V."/>
            <person name="Gerke L.C."/>
            <person name="Carroll A.S."/>
            <person name="Howson R.W."/>
            <person name="Weissman J.S."/>
            <person name="O'Shea E.K."/>
        </authorList>
    </citation>
    <scope>SUBCELLULAR LOCATION [LARGE SCALE ANALYSIS]</scope>
</reference>
<reference key="14">
    <citation type="journal article" date="2003" name="Nature">
        <title>Global analysis of protein expression in yeast.</title>
        <authorList>
            <person name="Ghaemmaghami S."/>
            <person name="Huh W.-K."/>
            <person name="Bower K."/>
            <person name="Howson R.W."/>
            <person name="Belle A."/>
            <person name="Dephoure N."/>
            <person name="O'Shea E.K."/>
            <person name="Weissman J.S."/>
        </authorList>
    </citation>
    <scope>LEVEL OF PROTEIN EXPRESSION [LARGE SCALE ANALYSIS]</scope>
</reference>
<reference key="15">
    <citation type="journal article" date="2003" name="Proc. Natl. Acad. Sci. U.S.A.">
        <title>The proteome of Saccharomyces cerevisiae mitochondria.</title>
        <authorList>
            <person name="Sickmann A."/>
            <person name="Reinders J."/>
            <person name="Wagner Y."/>
            <person name="Joppich C."/>
            <person name="Zahedi R.P."/>
            <person name="Meyer H.E."/>
            <person name="Schoenfisch B."/>
            <person name="Perschil I."/>
            <person name="Chacinska A."/>
            <person name="Guiard B."/>
            <person name="Rehling P."/>
            <person name="Pfanner N."/>
            <person name="Meisinger C."/>
        </authorList>
    </citation>
    <scope>SUBCELLULAR LOCATION [LARGE SCALE ANALYSIS]</scope>
    <source>
        <strain>ATCC 76625 / YPH499</strain>
    </source>
</reference>
<reference key="16">
    <citation type="journal article" date="2006" name="J. Biol. Chem.">
        <title>Protective mechanisms against homocysteine toxicity: the role of bleomycin hydrolase.</title>
        <authorList>
            <person name="Zimny J."/>
            <person name="Sikora M."/>
            <person name="Guranowski A."/>
            <person name="Jakubowski H."/>
        </authorList>
    </citation>
    <scope>FUNCTION</scope>
    <scope>MUTAGENESIS OF HIS-398</scope>
</reference>
<reference key="17">
    <citation type="journal article" date="2006" name="Proc. Natl. Acad. Sci. U.S.A.">
        <title>A large-scale full-length cDNA analysis to explore the budding yeast transcriptome.</title>
        <authorList>
            <person name="Miura F."/>
            <person name="Kawaguchi N."/>
            <person name="Sese J."/>
            <person name="Toyoda A."/>
            <person name="Hattori M."/>
            <person name="Morishita S."/>
            <person name="Ito T."/>
        </authorList>
    </citation>
    <scope>ALTERNATIVE INITIATION</scope>
</reference>
<reference key="18">
    <citation type="journal article" date="2008" name="Mol. Cell. Proteomics">
        <title>A multidimensional chromatography technology for in-depth phosphoproteome analysis.</title>
        <authorList>
            <person name="Albuquerque C.P."/>
            <person name="Smolka M.B."/>
            <person name="Payne S.H."/>
            <person name="Bafna V."/>
            <person name="Eng J."/>
            <person name="Zhou H."/>
        </authorList>
    </citation>
    <scope>IDENTIFICATION BY MASS SPECTROMETRY [LARGE SCALE ANALYSIS]</scope>
</reference>
<reference key="19">
    <citation type="journal article" date="1998" name="Cell">
        <title>The unusual active site of Gal6/bleomycin hydrolase can act as a carboxypeptidase, aminopeptidase, and peptide ligase.</title>
        <authorList>
            <person name="Zheng W."/>
            <person name="Johnston S.A."/>
            <person name="Joshua-Tor L."/>
        </authorList>
    </citation>
    <scope>X-RAY CRYSTALLOGRAPHY (1.87 ANGSTROMS) OF 30-483 OF MUTANT ALA-102</scope>
    <scope>MUTAGENESIS OF GLY-479</scope>
</reference>
<sequence length="483" mass="55483">MLPTSVSRSLYLKTFRSHLLRAPQIVLKRMSSSIDISKINSWNKEFQSDLTHQLATTVLKNYNADDALLNKTRLQKQDNRVFNTVVSTDSTPVTNQKSSGRCWLFAATNQLRLNVLSELNLKEFELSQAYLFFYDKLEKANYFLDQIVSSADQDIDSRLVQYLLAAPTEDGGQYSMFLNLVKKYGLIPKDLYGDLPYSTTASRKWNSLLTTKLREFAETLRTALKERSADDSIIVTLREQMQREIFRLMSLFMDIPPVQPNEQFTWEYVDKDKKIHTIKSTPLEFASKYAKLDPSTPVSLINDPRHPYGKLIKIDRLGNVLGGDAVIYLNVDNETLSKLVVKRLQNNKAVFFGSHTPKFMDKKTGVMDIELWNYPAIGYNLPQQKASRIRYHESLMTHAMLITGCHVDETSKLPLRYRVENSWGKDSGKDGLYVMTQKYFEEYCFQIVVDINELPKELASKFTSGKEEPIVLPIWDPMGALAK</sequence>
<comment type="function">
    <text evidence="4 7">The normal physiological role of the enzyme is unknown, but it is not essential for the viability of yeast cells. Has aminopeptidase activity, shortening substrate peptides sequentially by 1 amino acid. Has bleomycin hydrolase activity, which can protect the cell from the toxic effects of bleomycin. Has homocysteine-thiolactonase activity, protecting the cell against homocysteine toxicity. Acts as a repressor in the GAL4 regulatory system, but this does not require either the peptidase or nucleic acid-binding activities.</text>
</comment>
<comment type="catalytic activity">
    <reaction>
        <text>Inactivates bleomycin B2 (a cytotoxic glycometallopeptide) by hydrolysis of a carboxyamide bond of beta-aminoalanine, but also shows general aminopeptidase activity. The specificity varies somewhat with source, but amino acid arylamides of Met, Leu and Ala are preferred.</text>
        <dbReference type="EC" id="3.4.22.40"/>
    </reaction>
</comment>
<comment type="activity regulation">
    <text evidence="5 10">Inhibited by E64, a specific inhibitor of cysteine proteases, N-ethylmaleimide, iodacetamide, and mercury and zinc ions.</text>
</comment>
<comment type="biophysicochemical properties">
    <kinetics>
        <KM evidence="5 9 10">12.8 uM for arginine-4-methyl-7-coumarylamide</KM>
        <KM evidence="5 9 10">0.33 mM for glutamine-beta-naphthylamide</KM>
        <KM evidence="5 9 10">228 uM for lysine-4-methyl-7-coumarylamide</KM>
        <Vmax evidence="5 9 10">2.56 umol/h/mg enzyme for arginine-4-methyl-7-coumarylamide</Vmax>
        <Vmax evidence="5 9 10">370.0 nmol/min/mg enzyme for glutamine-beta-naphthylamide</Vmax>
        <text>N-terminal acetylation of lysine-4-methyl-7-coumarylamide (Ac-Lys-AMC) reduces the catalytic efficiency 50-fold towards this substrate.</text>
    </kinetics>
    <phDependence>
        <text evidence="5 9 10">Optimum pH is 7.5.</text>
    </phDependence>
</comment>
<comment type="subunit">
    <text evidence="8">Homohexamer. Binds to nucleic acids. Binds single-stranded DNA and RNA with higher affinity than double-stranded DNA.</text>
</comment>
<comment type="subcellular location">
    <molecule>Isoform Cytoplasmic</molecule>
    <subcellularLocation>
        <location>Cytoplasm</location>
    </subcellularLocation>
</comment>
<comment type="subcellular location">
    <molecule>Isoform Mitochondrial</molecule>
    <subcellularLocation>
        <location>Mitochondrion</location>
    </subcellularLocation>
</comment>
<comment type="alternative products">
    <event type="alternative initiation"/>
    <isoform>
        <id>Q01532-1</id>
        <name>Mitochondrial</name>
        <sequence type="displayed"/>
    </isoform>
    <isoform>
        <id>Q01532-2</id>
        <name>Cytoplasmic</name>
        <sequence type="described" ref="VSP_026453"/>
    </isoform>
</comment>
<comment type="PTM">
    <text>The N-terminus of isoform Cytoplasmic is blocked.</text>
</comment>
<comment type="mass spectrometry" mass="51830.0" method="Electrospray" evidence="11"/>
<comment type="miscellaneous">
    <text evidence="6">Present with 521 molecules/cell in log phase SD medium.</text>
</comment>
<comment type="miscellaneous">
    <molecule>Isoform Cytoplasmic</molecule>
    <text evidence="13">Produced by alternative initiation at Met-30 of isoform Mitochondrial.</text>
</comment>
<comment type="similarity">
    <text evidence="2 3">Belongs to the peptidase C1 family.</text>
</comment>
<gene>
    <name type="primary">LAP3</name>
    <name type="synonym">BLH1</name>
    <name type="synonym">GAL6</name>
    <name type="synonym">YCP1</name>
    <name type="ordered locus">YNL239W</name>
    <name type="ORF">N1118</name>
</gene>
<accession>Q01532</accession>
<accession>D6W0V4</accession>
<evidence type="ECO:0000255" key="1"/>
<evidence type="ECO:0000255" key="2">
    <source>
        <dbReference type="PROSITE-ProRule" id="PRU10088"/>
    </source>
</evidence>
<evidence type="ECO:0000255" key="3">
    <source>
        <dbReference type="PROSITE-ProRule" id="PRU10089"/>
    </source>
</evidence>
<evidence type="ECO:0000269" key="4">
    <source>
    </source>
</evidence>
<evidence type="ECO:0000269" key="5">
    <source>
    </source>
</evidence>
<evidence type="ECO:0000269" key="6">
    <source>
    </source>
</evidence>
<evidence type="ECO:0000269" key="7">
    <source>
    </source>
</evidence>
<evidence type="ECO:0000269" key="8">
    <source>
    </source>
</evidence>
<evidence type="ECO:0000269" key="9">
    <source>
    </source>
</evidence>
<evidence type="ECO:0000269" key="10">
    <source>
    </source>
</evidence>
<evidence type="ECO:0000269" key="11">
    <source>
    </source>
</evidence>
<evidence type="ECO:0000269" key="12">
    <source>
    </source>
</evidence>
<evidence type="ECO:0000305" key="13"/>
<evidence type="ECO:0007829" key="14">
    <source>
        <dbReference type="PDB" id="1A6R"/>
    </source>
</evidence>
<evidence type="ECO:0007829" key="15">
    <source>
        <dbReference type="PDB" id="2E01"/>
    </source>
</evidence>
<evidence type="ECO:0007829" key="16">
    <source>
        <dbReference type="PDB" id="2E03"/>
    </source>
</evidence>
<evidence type="ECO:0007829" key="17">
    <source>
        <dbReference type="PDB" id="3GCB"/>
    </source>
</evidence>
<organism>
    <name type="scientific">Saccharomyces cerevisiae (strain ATCC 204508 / S288c)</name>
    <name type="common">Baker's yeast</name>
    <dbReference type="NCBI Taxonomy" id="559292"/>
    <lineage>
        <taxon>Eukaryota</taxon>
        <taxon>Fungi</taxon>
        <taxon>Dikarya</taxon>
        <taxon>Ascomycota</taxon>
        <taxon>Saccharomycotina</taxon>
        <taxon>Saccharomycetes</taxon>
        <taxon>Saccharomycetales</taxon>
        <taxon>Saccharomycetaceae</taxon>
        <taxon>Saccharomyces</taxon>
    </lineage>
</organism>